<evidence type="ECO:0000255" key="1">
    <source>
        <dbReference type="HAMAP-Rule" id="MF_01074"/>
    </source>
</evidence>
<reference key="1">
    <citation type="submission" date="2006-10" db="EMBL/GenBank/DDBJ databases">
        <title>Complete sequence of chromosome of Pelobacter propionicus DSM 2379.</title>
        <authorList>
            <consortium name="US DOE Joint Genome Institute"/>
            <person name="Copeland A."/>
            <person name="Lucas S."/>
            <person name="Lapidus A."/>
            <person name="Barry K."/>
            <person name="Detter J.C."/>
            <person name="Glavina del Rio T."/>
            <person name="Hammon N."/>
            <person name="Israni S."/>
            <person name="Dalin E."/>
            <person name="Tice H."/>
            <person name="Pitluck S."/>
            <person name="Saunders E."/>
            <person name="Brettin T."/>
            <person name="Bruce D."/>
            <person name="Han C."/>
            <person name="Tapia R."/>
            <person name="Schmutz J."/>
            <person name="Larimer F."/>
            <person name="Land M."/>
            <person name="Hauser L."/>
            <person name="Kyrpides N."/>
            <person name="Kim E."/>
            <person name="Lovley D."/>
            <person name="Richardson P."/>
        </authorList>
    </citation>
    <scope>NUCLEOTIDE SEQUENCE [LARGE SCALE GENOMIC DNA]</scope>
    <source>
        <strain>DSM 2379 / NBRC 103807 / OttBd1</strain>
    </source>
</reference>
<dbReference type="EMBL" id="CP000482">
    <property type="protein sequence ID" value="ABK98257.1"/>
    <property type="molecule type" value="Genomic_DNA"/>
</dbReference>
<dbReference type="RefSeq" id="WP_011734570.1">
    <property type="nucleotide sequence ID" value="NC_008609.1"/>
</dbReference>
<dbReference type="SMR" id="A1ALN7"/>
<dbReference type="STRING" id="338966.Ppro_0626"/>
<dbReference type="KEGG" id="ppd:Ppro_0626"/>
<dbReference type="eggNOG" id="COG1641">
    <property type="taxonomic scope" value="Bacteria"/>
</dbReference>
<dbReference type="HOGENOM" id="CLU_028523_2_1_7"/>
<dbReference type="OrthoDB" id="9765625at2"/>
<dbReference type="Proteomes" id="UP000006732">
    <property type="component" value="Chromosome"/>
</dbReference>
<dbReference type="GO" id="GO:0016829">
    <property type="term" value="F:lyase activity"/>
    <property type="evidence" value="ECO:0007669"/>
    <property type="project" value="UniProtKB-UniRule"/>
</dbReference>
<dbReference type="GO" id="GO:0016151">
    <property type="term" value="F:nickel cation binding"/>
    <property type="evidence" value="ECO:0007669"/>
    <property type="project" value="UniProtKB-UniRule"/>
</dbReference>
<dbReference type="Gene3D" id="3.10.20.300">
    <property type="entry name" value="mk0293 like domain"/>
    <property type="match status" value="1"/>
</dbReference>
<dbReference type="Gene3D" id="3.30.70.1380">
    <property type="entry name" value="Transcriptional regulatory protein pf0864 domain like"/>
    <property type="match status" value="1"/>
</dbReference>
<dbReference type="HAMAP" id="MF_01074">
    <property type="entry name" value="LarC"/>
    <property type="match status" value="1"/>
</dbReference>
<dbReference type="InterPro" id="IPR002822">
    <property type="entry name" value="Ni_insertion"/>
</dbReference>
<dbReference type="NCBIfam" id="TIGR00299">
    <property type="entry name" value="nickel pincer cofactor biosynthesis protein LarC"/>
    <property type="match status" value="1"/>
</dbReference>
<dbReference type="PANTHER" id="PTHR36566">
    <property type="entry name" value="NICKEL INSERTION PROTEIN-RELATED"/>
    <property type="match status" value="1"/>
</dbReference>
<dbReference type="PANTHER" id="PTHR36566:SF1">
    <property type="entry name" value="PYRIDINIUM-3,5-BISTHIOCARBOXYLIC ACID MONONUCLEOTIDE NICKEL INSERTION PROTEIN"/>
    <property type="match status" value="1"/>
</dbReference>
<dbReference type="Pfam" id="PF01969">
    <property type="entry name" value="Ni_insertion"/>
    <property type="match status" value="1"/>
</dbReference>
<sequence>MKHIIHFDCFAGISGDMTVAALLDLGVPLEHLRDELARLDLPRDSYSLSIHRTERRHLAALRFDVQVLDQRTERGYAAIDGLIAASSLSGPVRERARAIFRRLAEAEALVHGVAVGEVHFHEVGAVDSIVDIVGTAICLDYLGVDGLSAAPLPLGSGFVHTAHGVLPVPAPATAELLKGMAVHGECGPGERVTPTGAAILAALATSVTAQPAMTVTAVGSGAGSRDFPDVPNILRAFLGRPEGEMSDGVLVAETNIDDSTPELLGYVMELLLEAGALDVFFTPIQMKKNRPGVQLSFLCRSGLLERLAALVLVETSAIGIRHYPVSRTTLERCMEERETPFGPLPFKLLFHDGRPLRAAPEYEACRRVARERGIPLQEVIRIVSQPTVVEGG</sequence>
<gene>
    <name type="ordered locus">Ppro_0626</name>
</gene>
<comment type="similarity">
    <text evidence="1">Belongs to the LarC family.</text>
</comment>
<protein>
    <recommendedName>
        <fullName evidence="1">Putative nickel insertion protein</fullName>
    </recommendedName>
</protein>
<feature type="chain" id="PRO_1000064657" description="Putative nickel insertion protein">
    <location>
        <begin position="1"/>
        <end position="392"/>
    </location>
</feature>
<organism>
    <name type="scientific">Pelobacter propionicus (strain DSM 2379 / NBRC 103807 / OttBd1)</name>
    <dbReference type="NCBI Taxonomy" id="338966"/>
    <lineage>
        <taxon>Bacteria</taxon>
        <taxon>Pseudomonadati</taxon>
        <taxon>Thermodesulfobacteriota</taxon>
        <taxon>Desulfuromonadia</taxon>
        <taxon>Desulfuromonadales</taxon>
        <taxon>Desulfuromonadaceae</taxon>
        <taxon>Pelobacter</taxon>
    </lineage>
</organism>
<keyword id="KW-0533">Nickel</keyword>
<keyword id="KW-1185">Reference proteome</keyword>
<name>Y626_PELPD</name>
<proteinExistence type="inferred from homology"/>
<accession>A1ALN7</accession>